<keyword id="KW-0007">Acetylation</keyword>
<keyword id="KW-0963">Cytoplasm</keyword>
<keyword id="KW-0903">Direct protein sequencing</keyword>
<keyword id="KW-0597">Phosphoprotein</keyword>
<keyword id="KW-0650">Protein phosphatase inhibitor</keyword>
<keyword id="KW-1185">Reference proteome</keyword>
<organism>
    <name type="scientific">Bos taurus</name>
    <name type="common">Bovine</name>
    <dbReference type="NCBI Taxonomy" id="9913"/>
    <lineage>
        <taxon>Eukaryota</taxon>
        <taxon>Metazoa</taxon>
        <taxon>Chordata</taxon>
        <taxon>Craniata</taxon>
        <taxon>Vertebrata</taxon>
        <taxon>Euteleostomi</taxon>
        <taxon>Mammalia</taxon>
        <taxon>Eutheria</taxon>
        <taxon>Laurasiatheria</taxon>
        <taxon>Artiodactyla</taxon>
        <taxon>Ruminantia</taxon>
        <taxon>Pecora</taxon>
        <taxon>Bovidae</taxon>
        <taxon>Bovinae</taxon>
        <taxon>Bos</taxon>
    </lineage>
</organism>
<reference key="1">
    <citation type="journal article" date="1986" name="J. Biol. Chem.">
        <title>DARPP-32, a dopamine- and cyclic AMP-regulated neuronal phosphoprotein. Primary structure and homology with protein phosphatase inhibitor-1.</title>
        <authorList>
            <person name="Williams K.R."/>
            <person name="Hemmings H.C. Jr."/>
            <person name="Lopresti M.B."/>
            <person name="Konigsberg W.H."/>
            <person name="Greengard P."/>
        </authorList>
    </citation>
    <scope>PROTEIN SEQUENCE</scope>
    <scope>ACETYLATION AT MET-1</scope>
    <scope>PHOSPHORYLATION AT THR-34</scope>
</reference>
<reference key="2">
    <citation type="journal article" date="1988" name="J. Neurosci.">
        <title>Cloning of cDNA for DARPP-32, a dopamine- and cyclic AMP-regulated neuronal phosphoprotein.</title>
        <authorList>
            <person name="Kurihara T."/>
            <person name="Lewis R.M."/>
            <person name="Eisler J."/>
            <person name="Greengard P."/>
        </authorList>
    </citation>
    <scope>NUCLEOTIDE SEQUENCE [MRNA]</scope>
</reference>
<reference key="3">
    <citation type="submission" date="2006-06" db="EMBL/GenBank/DDBJ databases">
        <authorList>
            <consortium name="NIH - Mammalian Gene Collection (MGC) project"/>
        </authorList>
    </citation>
    <scope>NUCLEOTIDE SEQUENCE [LARGE SCALE MRNA]</scope>
    <source>
        <strain>Hereford</strain>
        <tissue>Basal ganglia</tissue>
    </source>
</reference>
<comment type="function">
    <text>Inhibitor of protein-phosphatase 1.</text>
</comment>
<comment type="subcellular location">
    <subcellularLocation>
        <location>Cytoplasm</location>
    </subcellularLocation>
</comment>
<comment type="PTM">
    <text>Dopamine- and cyclic AMP-regulated neuronal phosphoprotein.</text>
</comment>
<comment type="PTM">
    <text evidence="5">Phosphorylation of Thr-34 is required for activity.</text>
</comment>
<comment type="similarity">
    <text evidence="6">Belongs to the protein phosphatase inhibitor 1 family.</text>
</comment>
<name>PPR1B_BOVIN</name>
<gene>
    <name type="primary">PPP1R1B</name>
</gene>
<accession>P07516</accession>
<accession>Q17QN1</accession>
<dbReference type="EMBL" id="M27444">
    <property type="protein sequence ID" value="AAA57248.1"/>
    <property type="molecule type" value="mRNA"/>
</dbReference>
<dbReference type="EMBL" id="BC118264">
    <property type="protein sequence ID" value="AAI18265.1"/>
    <property type="molecule type" value="mRNA"/>
</dbReference>
<dbReference type="PIR" id="A45668">
    <property type="entry name" value="A26301"/>
</dbReference>
<dbReference type="RefSeq" id="NP_777072.1">
    <property type="nucleotide sequence ID" value="NM_174647.2"/>
</dbReference>
<dbReference type="DIP" id="DIP-20N"/>
<dbReference type="FunCoup" id="P07516">
    <property type="interactions" value="164"/>
</dbReference>
<dbReference type="STRING" id="9913.ENSBTAP00000073040"/>
<dbReference type="iPTMnet" id="P07516"/>
<dbReference type="PaxDb" id="9913-ENSBTAP00000007930"/>
<dbReference type="Ensembl" id="ENSBTAT00000081120.2">
    <property type="protein sequence ID" value="ENSBTAP00000073040.2"/>
    <property type="gene ID" value="ENSBTAG00000006035.4"/>
</dbReference>
<dbReference type="GeneID" id="282459"/>
<dbReference type="KEGG" id="bta:282459"/>
<dbReference type="CTD" id="84152"/>
<dbReference type="VEuPathDB" id="HostDB:ENSBTAG00000006035"/>
<dbReference type="VGNC" id="VGNC:33234">
    <property type="gene designation" value="PPP1R1B"/>
</dbReference>
<dbReference type="eggNOG" id="ENOG502S19Z">
    <property type="taxonomic scope" value="Eukaryota"/>
</dbReference>
<dbReference type="GeneTree" id="ENSGT00730000111283"/>
<dbReference type="HOGENOM" id="CLU_092269_3_0_1"/>
<dbReference type="InParanoid" id="P07516"/>
<dbReference type="OrthoDB" id="9946890at2759"/>
<dbReference type="TreeFam" id="TF332576"/>
<dbReference type="Reactome" id="R-BTA-180024">
    <property type="pathway name" value="DARPP-32 events"/>
</dbReference>
<dbReference type="Proteomes" id="UP000009136">
    <property type="component" value="Chromosome 19"/>
</dbReference>
<dbReference type="Bgee" id="ENSBTAG00000006035">
    <property type="expression patterns" value="Expressed in prostate gland and 104 other cell types or tissues"/>
</dbReference>
<dbReference type="GO" id="GO:1904115">
    <property type="term" value="C:axon cytoplasm"/>
    <property type="evidence" value="ECO:0000314"/>
    <property type="project" value="CAFA"/>
</dbReference>
<dbReference type="GO" id="GO:0005737">
    <property type="term" value="C:cytoplasm"/>
    <property type="evidence" value="ECO:0000318"/>
    <property type="project" value="GO_Central"/>
</dbReference>
<dbReference type="GO" id="GO:0032839">
    <property type="term" value="C:dendrite cytoplasm"/>
    <property type="evidence" value="ECO:0000314"/>
    <property type="project" value="CAFA"/>
</dbReference>
<dbReference type="GO" id="GO:0043025">
    <property type="term" value="C:neuronal cell body"/>
    <property type="evidence" value="ECO:0000314"/>
    <property type="project" value="CAFA"/>
</dbReference>
<dbReference type="GO" id="GO:0140678">
    <property type="term" value="F:molecular function inhibitor activity"/>
    <property type="evidence" value="ECO:0000314"/>
    <property type="project" value="DisProt"/>
</dbReference>
<dbReference type="GO" id="GO:0004864">
    <property type="term" value="F:protein phosphatase inhibitor activity"/>
    <property type="evidence" value="ECO:0007669"/>
    <property type="project" value="UniProtKB-KW"/>
</dbReference>
<dbReference type="GO" id="GO:0035556">
    <property type="term" value="P:intracellular signal transduction"/>
    <property type="evidence" value="ECO:0000318"/>
    <property type="project" value="GO_Central"/>
</dbReference>
<dbReference type="DisProt" id="DP00421"/>
<dbReference type="InterPro" id="IPR008466">
    <property type="entry name" value="PPP1R1A/B/C"/>
</dbReference>
<dbReference type="PANTHER" id="PTHR15417:SF2">
    <property type="entry name" value="PROTEIN PHOSPHATASE 1 REGULATORY SUBUNIT 1B"/>
    <property type="match status" value="1"/>
</dbReference>
<dbReference type="PANTHER" id="PTHR15417">
    <property type="entry name" value="PROTEIN PHOSPHATASE INHIBITOR AND DOPAMINE- AND CAMP-REGULATED NEURONAL PHOSPHOPROTEIN"/>
    <property type="match status" value="1"/>
</dbReference>
<dbReference type="Pfam" id="PF05395">
    <property type="entry name" value="DARPP-32"/>
    <property type="match status" value="1"/>
</dbReference>
<protein>
    <recommendedName>
        <fullName>Protein phosphatase 1 regulatory subunit 1B</fullName>
    </recommendedName>
    <alternativeName>
        <fullName>DARPP-32</fullName>
    </alternativeName>
    <alternativeName>
        <fullName>Dopamine- and cAMP-regulated neuronal phosphoprotein</fullName>
    </alternativeName>
</protein>
<evidence type="ECO:0000250" key="1">
    <source>
        <dbReference type="UniProtKB" id="Q60829"/>
    </source>
</evidence>
<evidence type="ECO:0000250" key="2">
    <source>
        <dbReference type="UniProtKB" id="Q6J4I0"/>
    </source>
</evidence>
<evidence type="ECO:0000250" key="3">
    <source>
        <dbReference type="UniProtKB" id="Q9UD71"/>
    </source>
</evidence>
<evidence type="ECO:0000256" key="4">
    <source>
        <dbReference type="SAM" id="MobiDB-lite"/>
    </source>
</evidence>
<evidence type="ECO:0000269" key="5">
    <source>
    </source>
</evidence>
<evidence type="ECO:0000305" key="6"/>
<sequence length="202" mass="22614">MDPKDRKKIQFSVPAPPSQLDPRQVEMIRRRRPTPAMLFRLSEHSSPEEEASPHQRASGEGHHLKSKRSNPCAYTPPSLKAVQRIAESHLQSISNLGENQASEEEDELGELRELGYPREEEEEEEEEDEEEEEDSQAEVLKGSRGSAGQKTTYGQGLEGPWERPPPLDGPQRDGSSEDQVEDPALNEPGEEPQRPAHPEPGT</sequence>
<proteinExistence type="evidence at protein level"/>
<feature type="chain" id="PRO_0000071472" description="Protein phosphatase 1 regulatory subunit 1B">
    <location>
        <begin position="1"/>
        <end position="202"/>
    </location>
</feature>
<feature type="region of interest" description="Disordered" evidence="4">
    <location>
        <begin position="1"/>
        <end position="202"/>
    </location>
</feature>
<feature type="compositionally biased region" description="Basic and acidic residues" evidence="4">
    <location>
        <begin position="41"/>
        <end position="63"/>
    </location>
</feature>
<feature type="compositionally biased region" description="Polar residues" evidence="4">
    <location>
        <begin position="89"/>
        <end position="100"/>
    </location>
</feature>
<feature type="compositionally biased region" description="Basic and acidic residues" evidence="4">
    <location>
        <begin position="109"/>
        <end position="118"/>
    </location>
</feature>
<feature type="compositionally biased region" description="Acidic residues" evidence="4">
    <location>
        <begin position="119"/>
        <end position="136"/>
    </location>
</feature>
<feature type="compositionally biased region" description="Basic and acidic residues" evidence="4">
    <location>
        <begin position="191"/>
        <end position="202"/>
    </location>
</feature>
<feature type="modified residue" description="N-acetylmethionine" evidence="5">
    <location>
        <position position="1"/>
    </location>
</feature>
<feature type="modified residue" description="Phosphothreonine; by PKA" evidence="5">
    <location>
        <position position="34"/>
    </location>
</feature>
<feature type="modified residue" description="Phosphoserine" evidence="1">
    <location>
        <position position="45"/>
    </location>
</feature>
<feature type="modified residue" description="Phosphoserine" evidence="1">
    <location>
        <position position="46"/>
    </location>
</feature>
<feature type="modified residue" description="Phosphothreonine; by CDK5" evidence="3">
    <location>
        <position position="75"/>
    </location>
</feature>
<feature type="modified residue" description="Phosphoserine" evidence="1">
    <location>
        <position position="102"/>
    </location>
</feature>
<feature type="modified residue" description="Phosphoserine" evidence="2">
    <location>
        <position position="135"/>
    </location>
</feature>